<organism>
    <name type="scientific">Caldanaerobacter subterraneus subsp. tengcongensis (strain DSM 15242 / JCM 11007 / NBRC 100824 / MB4)</name>
    <name type="common">Thermoanaerobacter tengcongensis</name>
    <dbReference type="NCBI Taxonomy" id="273068"/>
    <lineage>
        <taxon>Bacteria</taxon>
        <taxon>Bacillati</taxon>
        <taxon>Bacillota</taxon>
        <taxon>Clostridia</taxon>
        <taxon>Thermoanaerobacterales</taxon>
        <taxon>Thermoanaerobacteraceae</taxon>
        <taxon>Caldanaerobacter</taxon>
    </lineage>
</organism>
<reference key="1">
    <citation type="journal article" date="2002" name="Genome Res.">
        <title>A complete sequence of the T. tengcongensis genome.</title>
        <authorList>
            <person name="Bao Q."/>
            <person name="Tian Y."/>
            <person name="Li W."/>
            <person name="Xu Z."/>
            <person name="Xuan Z."/>
            <person name="Hu S."/>
            <person name="Dong W."/>
            <person name="Yang J."/>
            <person name="Chen Y."/>
            <person name="Xue Y."/>
            <person name="Xu Y."/>
            <person name="Lai X."/>
            <person name="Huang L."/>
            <person name="Dong X."/>
            <person name="Ma Y."/>
            <person name="Ling L."/>
            <person name="Tan H."/>
            <person name="Chen R."/>
            <person name="Wang J."/>
            <person name="Yu J."/>
            <person name="Yang H."/>
        </authorList>
    </citation>
    <scope>NUCLEOTIDE SEQUENCE [LARGE SCALE GENOMIC DNA]</scope>
    <source>
        <strain>DSM 15242 / JCM 11007 / NBRC 100824 / MB4</strain>
    </source>
</reference>
<dbReference type="EC" id="2.7.7.7" evidence="1"/>
<dbReference type="EMBL" id="AE008691">
    <property type="protein sequence ID" value="AAM24620.1"/>
    <property type="molecule type" value="Genomic_DNA"/>
</dbReference>
<dbReference type="RefSeq" id="WP_011025683.1">
    <property type="nucleotide sequence ID" value="NC_003869.1"/>
</dbReference>
<dbReference type="SMR" id="Q8RA32"/>
<dbReference type="STRING" id="273068.TTE1398"/>
<dbReference type="KEGG" id="tte:TTE1398"/>
<dbReference type="eggNOG" id="COG2176">
    <property type="taxonomic scope" value="Bacteria"/>
</dbReference>
<dbReference type="HOGENOM" id="CLU_003297_2_0_9"/>
<dbReference type="OrthoDB" id="9804290at2"/>
<dbReference type="Proteomes" id="UP000000555">
    <property type="component" value="Chromosome"/>
</dbReference>
<dbReference type="GO" id="GO:0005737">
    <property type="term" value="C:cytoplasm"/>
    <property type="evidence" value="ECO:0007669"/>
    <property type="project" value="UniProtKB-SubCell"/>
</dbReference>
<dbReference type="GO" id="GO:0008408">
    <property type="term" value="F:3'-5' exonuclease activity"/>
    <property type="evidence" value="ECO:0007669"/>
    <property type="project" value="UniProtKB-UniRule"/>
</dbReference>
<dbReference type="GO" id="GO:0003677">
    <property type="term" value="F:DNA binding"/>
    <property type="evidence" value="ECO:0007669"/>
    <property type="project" value="UniProtKB-UniRule"/>
</dbReference>
<dbReference type="GO" id="GO:0003887">
    <property type="term" value="F:DNA-directed DNA polymerase activity"/>
    <property type="evidence" value="ECO:0007669"/>
    <property type="project" value="UniProtKB-UniRule"/>
</dbReference>
<dbReference type="GO" id="GO:0006261">
    <property type="term" value="P:DNA-templated DNA replication"/>
    <property type="evidence" value="ECO:0007669"/>
    <property type="project" value="UniProtKB-UniRule"/>
</dbReference>
<dbReference type="CDD" id="cd06127">
    <property type="entry name" value="DEDDh"/>
    <property type="match status" value="1"/>
</dbReference>
<dbReference type="CDD" id="cd07435">
    <property type="entry name" value="PHP_PolIIIA_POLC"/>
    <property type="match status" value="1"/>
</dbReference>
<dbReference type="CDD" id="cd04484">
    <property type="entry name" value="polC_OBF"/>
    <property type="match status" value="1"/>
</dbReference>
<dbReference type="FunFam" id="3.30.420.10:FF:000045">
    <property type="entry name" value="3'-5' exonuclease DinG"/>
    <property type="match status" value="1"/>
</dbReference>
<dbReference type="Gene3D" id="1.10.150.870">
    <property type="match status" value="1"/>
</dbReference>
<dbReference type="Gene3D" id="3.30.1900.20">
    <property type="match status" value="2"/>
</dbReference>
<dbReference type="Gene3D" id="6.10.140.1510">
    <property type="match status" value="1"/>
</dbReference>
<dbReference type="Gene3D" id="3.20.20.140">
    <property type="entry name" value="Metal-dependent hydrolases"/>
    <property type="match status" value="1"/>
</dbReference>
<dbReference type="Gene3D" id="2.40.50.140">
    <property type="entry name" value="Nucleic acid-binding proteins"/>
    <property type="match status" value="1"/>
</dbReference>
<dbReference type="Gene3D" id="1.10.150.700">
    <property type="entry name" value="PolC, middle finger domain"/>
    <property type="match status" value="1"/>
</dbReference>
<dbReference type="Gene3D" id="3.30.420.10">
    <property type="entry name" value="Ribonuclease H-like superfamily/Ribonuclease H"/>
    <property type="match status" value="1"/>
</dbReference>
<dbReference type="HAMAP" id="MF_00356">
    <property type="entry name" value="DNApol_PolC"/>
    <property type="match status" value="1"/>
</dbReference>
<dbReference type="InterPro" id="IPR011708">
    <property type="entry name" value="DNA_pol3_alpha_NTPase_dom"/>
</dbReference>
<dbReference type="InterPro" id="IPR040982">
    <property type="entry name" value="DNA_pol3_finger"/>
</dbReference>
<dbReference type="InterPro" id="IPR024754">
    <property type="entry name" value="DNA_PolC-like_N_II"/>
</dbReference>
<dbReference type="InterPro" id="IPR004805">
    <property type="entry name" value="DnaE2/DnaE/PolC"/>
</dbReference>
<dbReference type="InterPro" id="IPR029460">
    <property type="entry name" value="DNAPol_HHH"/>
</dbReference>
<dbReference type="InterPro" id="IPR006054">
    <property type="entry name" value="DnaQ"/>
</dbReference>
<dbReference type="InterPro" id="IPR013520">
    <property type="entry name" value="Exonuclease_RNaseT/DNA_pol3"/>
</dbReference>
<dbReference type="InterPro" id="IPR012340">
    <property type="entry name" value="NA-bd_OB-fold"/>
</dbReference>
<dbReference type="InterPro" id="IPR004365">
    <property type="entry name" value="NA-bd_OB_tRNA"/>
</dbReference>
<dbReference type="InterPro" id="IPR004013">
    <property type="entry name" value="PHP_dom"/>
</dbReference>
<dbReference type="InterPro" id="IPR003141">
    <property type="entry name" value="Pol/His_phosphatase_N"/>
</dbReference>
<dbReference type="InterPro" id="IPR006308">
    <property type="entry name" value="Pol_III_a_PolC-type_gram_pos"/>
</dbReference>
<dbReference type="InterPro" id="IPR044923">
    <property type="entry name" value="PolC_middle_finger_sf"/>
</dbReference>
<dbReference type="InterPro" id="IPR012337">
    <property type="entry name" value="RNaseH-like_sf"/>
</dbReference>
<dbReference type="InterPro" id="IPR036397">
    <property type="entry name" value="RNaseH_sf"/>
</dbReference>
<dbReference type="NCBIfam" id="TIGR00573">
    <property type="entry name" value="dnaq"/>
    <property type="match status" value="1"/>
</dbReference>
<dbReference type="NCBIfam" id="TIGR01405">
    <property type="entry name" value="polC_Gram_pos"/>
    <property type="match status" value="1"/>
</dbReference>
<dbReference type="NCBIfam" id="NF001688">
    <property type="entry name" value="PRK00448.1"/>
    <property type="match status" value="1"/>
</dbReference>
<dbReference type="PANTHER" id="PTHR32294:SF5">
    <property type="entry name" value="DNA POLYMERASE III POLC-TYPE"/>
    <property type="match status" value="1"/>
</dbReference>
<dbReference type="PANTHER" id="PTHR32294">
    <property type="entry name" value="DNA POLYMERASE III SUBUNIT ALPHA"/>
    <property type="match status" value="1"/>
</dbReference>
<dbReference type="Pfam" id="PF11490">
    <property type="entry name" value="DNA_pol3_a_NII"/>
    <property type="match status" value="1"/>
</dbReference>
<dbReference type="Pfam" id="PF07733">
    <property type="entry name" value="DNA_pol3_alpha"/>
    <property type="match status" value="1"/>
</dbReference>
<dbReference type="Pfam" id="PF17657">
    <property type="entry name" value="DNA_pol3_finger"/>
    <property type="match status" value="1"/>
</dbReference>
<dbReference type="Pfam" id="PF14579">
    <property type="entry name" value="HHH_6"/>
    <property type="match status" value="1"/>
</dbReference>
<dbReference type="Pfam" id="PF02811">
    <property type="entry name" value="PHP"/>
    <property type="match status" value="1"/>
</dbReference>
<dbReference type="Pfam" id="PF00929">
    <property type="entry name" value="RNase_T"/>
    <property type="match status" value="1"/>
</dbReference>
<dbReference type="Pfam" id="PF01336">
    <property type="entry name" value="tRNA_anti-codon"/>
    <property type="match status" value="1"/>
</dbReference>
<dbReference type="SMART" id="SM00479">
    <property type="entry name" value="EXOIII"/>
    <property type="match status" value="1"/>
</dbReference>
<dbReference type="SMART" id="SM00481">
    <property type="entry name" value="POLIIIAc"/>
    <property type="match status" value="1"/>
</dbReference>
<dbReference type="SUPFAM" id="SSF160975">
    <property type="entry name" value="AF1531-like"/>
    <property type="match status" value="1"/>
</dbReference>
<dbReference type="SUPFAM" id="SSF50249">
    <property type="entry name" value="Nucleic acid-binding proteins"/>
    <property type="match status" value="1"/>
</dbReference>
<dbReference type="SUPFAM" id="SSF53098">
    <property type="entry name" value="Ribonuclease H-like"/>
    <property type="match status" value="1"/>
</dbReference>
<feature type="chain" id="PRO_0000204606" description="DNA polymerase III PolC-type">
    <location>
        <begin position="1"/>
        <end position="1401"/>
    </location>
</feature>
<feature type="domain" description="Exonuclease">
    <location>
        <begin position="388"/>
        <end position="543"/>
    </location>
</feature>
<keyword id="KW-0963">Cytoplasm</keyword>
<keyword id="KW-0235">DNA replication</keyword>
<keyword id="KW-0239">DNA-directed DNA polymerase</keyword>
<keyword id="KW-0269">Exonuclease</keyword>
<keyword id="KW-0378">Hydrolase</keyword>
<keyword id="KW-0540">Nuclease</keyword>
<keyword id="KW-0548">Nucleotidyltransferase</keyword>
<keyword id="KW-1185">Reference proteome</keyword>
<keyword id="KW-0808">Transferase</keyword>
<proteinExistence type="inferred from homology"/>
<protein>
    <recommendedName>
        <fullName evidence="1">DNA polymerase III PolC-type</fullName>
        <shortName evidence="1">PolIII</shortName>
        <ecNumber evidence="1">2.7.7.7</ecNumber>
    </recommendedName>
</protein>
<evidence type="ECO:0000255" key="1">
    <source>
        <dbReference type="HAMAP-Rule" id="MF_00356"/>
    </source>
</evidence>
<name>DPO3_CALS4</name>
<comment type="function">
    <text evidence="1">Required for replicative DNA synthesis. This DNA polymerase also exhibits 3' to 5' exonuclease activity.</text>
</comment>
<comment type="catalytic activity">
    <reaction evidence="1">
        <text>DNA(n) + a 2'-deoxyribonucleoside 5'-triphosphate = DNA(n+1) + diphosphate</text>
        <dbReference type="Rhea" id="RHEA:22508"/>
        <dbReference type="Rhea" id="RHEA-COMP:17339"/>
        <dbReference type="Rhea" id="RHEA-COMP:17340"/>
        <dbReference type="ChEBI" id="CHEBI:33019"/>
        <dbReference type="ChEBI" id="CHEBI:61560"/>
        <dbReference type="ChEBI" id="CHEBI:173112"/>
        <dbReference type="EC" id="2.7.7.7"/>
    </reaction>
</comment>
<comment type="subcellular location">
    <subcellularLocation>
        <location evidence="1">Cytoplasm</location>
    </subcellularLocation>
</comment>
<comment type="similarity">
    <text evidence="1">Belongs to the DNA polymerase type-C family. PolC subfamily.</text>
</comment>
<accession>Q8RA32</accession>
<sequence length="1401" mass="158806">MVPATFLENMQIKKVRVEKKSRKLTVVVSSFSSNAQKLSEFQSFLEESFPSLKEIKIVVESPSLSTVEEVLENWEKVVLELSEEYPSSLSFLKTCDVAKEGQNRITVKAPTYAIYEMAKSSKLDFAIREFLRNRYELNLDVELIFSEEGEEIAEKIIEEDIKAIEEVIQKDEKSKKEKSRSEENRVLLGKEMKAKPISIKDVSAETDEVVIEGEIFSIDFKELKSKVLMVFDITDYTSSILVKTFLTEEKYEILKDEIDVGTFVRLRGNVIYDKYEGDLVIDLKDLELIPPKKRMDLSEEKRVELHLHTQMSTLDAVPSATEVIKRAAEWGHKAVAITDHAVVQAFPEAMEASREYGVKVIYGMEGYMVDDGIPIVTGESEASLEGEFVVFDIETTGLSNINDEIIEIGAVKIKNKKIVDTFETFVNPQIPISSFITKLTGIDESMVKDAPLIEEVLPKFLEFAKGAVLVAHNANFDVSFIKSKAKKLGLTVENTVLDTLELSRHLYQDLKNYKLDTLAEFFEVKLLHHHRAVEDAKATAEIFIKMLEKLQEIGIKSVSEINSVLMEREVDVKKLPVYHVTILVKDQKGLRNLYEIISRSNLEFFHRTPRIPKSLLVKMREGLIIGSACEQGEVFRALVSNLEEKKLEDIINFYDYLEIQPVGNNEFLIERGEVRSVEELKEINRKIYELGKKYNKLVVATGDVHFLDPWDDVYRKILMAGKGYKDADRQPPLYFRTTEEMLMEFEYLGEEAAREVVIENPNKIAEIVEDVKPIPEGTFPPVIEGAEEELRRITLEKAHEIYGDPLPPIVQERLDRELNAIINNGYAVMYVIAQKLVSKSLQDGYLVGSRGSVGSSLVATMSGITEVNPLPPHYVCPKCKHSEFVTDGSFGCGVDMPDKYCPNCGTLMKKDGFDIPFEVFMGFEGDKEPDIDLNFSGEYQPIAHRYTEELFGKGHVFRAGTIGTLADKTAYGYVKKYFEERNLTVHKSEIKRLTMGCTGIKRTTGQHPGGVMVVPKDKSIYDFTPIQRPADAEDTDVITTHFDYHSLSGKLLKLDILGHDDPTVIRMLEDLTGVNARKIPLDDKKTMSLFTSVEALGIDPEELGTPVGTLGLPEFGTKFVRQMLIETRPTTFDELVRISGLSHGTDVWLNNAQDIIREGIATLKEVIAARDDIMLYLISKGMDKKLSFKIMENVRKGKGVTQEEIEEMKKHGVPDWFIQSCQKIKYMFPKAHAVAYVIMAFRIAYFKVYYPEAFYATYFTVRADDFNLDIVLGGKESIKRAIKEIEAKGNNATPKEKNLLTVLEVALEMYLRGIKFTNVDLYRSDAEKFLITEEGLLPPLNSLEGVGIQAAKAIAQERENGKFISIEDFRNRTRVSKTVIEILKQYGCLEDLPESNQLSLF</sequence>
<gene>
    <name evidence="1" type="primary">polC</name>
    <name type="ordered locus">TTE1398</name>
</gene>